<gene>
    <name evidence="1" type="primary">recO</name>
    <name type="ordered locus">Aave_1198</name>
</gene>
<comment type="function">
    <text evidence="1">Involved in DNA repair and RecF pathway recombination.</text>
</comment>
<comment type="similarity">
    <text evidence="1">Belongs to the RecO family.</text>
</comment>
<sequence length="260" mass="28374">MAARRISDEPAYVLHRYDWSESSLILDVFTRHHGRVALVARGAKKPTSNFRPVLLPLQPLRITYTLNGEGREEVHGLKGAEWVGGHVMPTGDALLSGLYLNELLMRLLAREDTHAALFDAYAGVVRVLASEHGDALEPVLRSFELLLLREIGLLPALDVETSTLAPLAPAARYALVPEAGLRPALPSDRSTLGGAQWRQLERSLGEAQPYTATLRAIVAGLAASASPAADLKPQLRALLQYHCGSPMLRTRQLMIDLQSL</sequence>
<dbReference type="EMBL" id="CP000512">
    <property type="protein sequence ID" value="ABM31790.1"/>
    <property type="molecule type" value="Genomic_DNA"/>
</dbReference>
<dbReference type="RefSeq" id="WP_011794342.1">
    <property type="nucleotide sequence ID" value="NC_008752.1"/>
</dbReference>
<dbReference type="SMR" id="A1TLF2"/>
<dbReference type="STRING" id="397945.Aave_1198"/>
<dbReference type="GeneID" id="79790857"/>
<dbReference type="KEGG" id="aav:Aave_1198"/>
<dbReference type="eggNOG" id="COG1381">
    <property type="taxonomic scope" value="Bacteria"/>
</dbReference>
<dbReference type="HOGENOM" id="CLU_066645_0_0_4"/>
<dbReference type="OrthoDB" id="9804792at2"/>
<dbReference type="Proteomes" id="UP000002596">
    <property type="component" value="Chromosome"/>
</dbReference>
<dbReference type="GO" id="GO:0043590">
    <property type="term" value="C:bacterial nucleoid"/>
    <property type="evidence" value="ECO:0007669"/>
    <property type="project" value="TreeGrafter"/>
</dbReference>
<dbReference type="GO" id="GO:0006310">
    <property type="term" value="P:DNA recombination"/>
    <property type="evidence" value="ECO:0007669"/>
    <property type="project" value="UniProtKB-UniRule"/>
</dbReference>
<dbReference type="GO" id="GO:0006302">
    <property type="term" value="P:double-strand break repair"/>
    <property type="evidence" value="ECO:0007669"/>
    <property type="project" value="TreeGrafter"/>
</dbReference>
<dbReference type="Gene3D" id="2.40.50.140">
    <property type="entry name" value="Nucleic acid-binding proteins"/>
    <property type="match status" value="1"/>
</dbReference>
<dbReference type="Gene3D" id="1.20.1440.120">
    <property type="entry name" value="Recombination protein O, C-terminal domain"/>
    <property type="match status" value="1"/>
</dbReference>
<dbReference type="HAMAP" id="MF_00201">
    <property type="entry name" value="RecO"/>
    <property type="match status" value="1"/>
</dbReference>
<dbReference type="InterPro" id="IPR037278">
    <property type="entry name" value="ARFGAP/RecO"/>
</dbReference>
<dbReference type="InterPro" id="IPR022572">
    <property type="entry name" value="DNA_rep/recomb_RecO_N"/>
</dbReference>
<dbReference type="InterPro" id="IPR012340">
    <property type="entry name" value="NA-bd_OB-fold"/>
</dbReference>
<dbReference type="InterPro" id="IPR003717">
    <property type="entry name" value="RecO"/>
</dbReference>
<dbReference type="InterPro" id="IPR042242">
    <property type="entry name" value="RecO_C"/>
</dbReference>
<dbReference type="NCBIfam" id="TIGR00613">
    <property type="entry name" value="reco"/>
    <property type="match status" value="1"/>
</dbReference>
<dbReference type="PANTHER" id="PTHR33991">
    <property type="entry name" value="DNA REPAIR PROTEIN RECO"/>
    <property type="match status" value="1"/>
</dbReference>
<dbReference type="PANTHER" id="PTHR33991:SF1">
    <property type="entry name" value="DNA REPAIR PROTEIN RECO"/>
    <property type="match status" value="1"/>
</dbReference>
<dbReference type="Pfam" id="PF02565">
    <property type="entry name" value="RecO_C"/>
    <property type="match status" value="1"/>
</dbReference>
<dbReference type="Pfam" id="PF11967">
    <property type="entry name" value="RecO_N"/>
    <property type="match status" value="1"/>
</dbReference>
<dbReference type="SUPFAM" id="SSF57863">
    <property type="entry name" value="ArfGap/RecO-like zinc finger"/>
    <property type="match status" value="1"/>
</dbReference>
<dbReference type="SUPFAM" id="SSF50249">
    <property type="entry name" value="Nucleic acid-binding proteins"/>
    <property type="match status" value="1"/>
</dbReference>
<evidence type="ECO:0000255" key="1">
    <source>
        <dbReference type="HAMAP-Rule" id="MF_00201"/>
    </source>
</evidence>
<proteinExistence type="inferred from homology"/>
<name>RECO_PARC0</name>
<protein>
    <recommendedName>
        <fullName evidence="1">DNA repair protein RecO</fullName>
    </recommendedName>
    <alternativeName>
        <fullName evidence="1">Recombination protein O</fullName>
    </alternativeName>
</protein>
<organism>
    <name type="scientific">Paracidovorax citrulli (strain AAC00-1)</name>
    <name type="common">Acidovorax citrulli</name>
    <dbReference type="NCBI Taxonomy" id="397945"/>
    <lineage>
        <taxon>Bacteria</taxon>
        <taxon>Pseudomonadati</taxon>
        <taxon>Pseudomonadota</taxon>
        <taxon>Betaproteobacteria</taxon>
        <taxon>Burkholderiales</taxon>
        <taxon>Comamonadaceae</taxon>
        <taxon>Paracidovorax</taxon>
    </lineage>
</organism>
<feature type="chain" id="PRO_1000012116" description="DNA repair protein RecO">
    <location>
        <begin position="1"/>
        <end position="260"/>
    </location>
</feature>
<keyword id="KW-0227">DNA damage</keyword>
<keyword id="KW-0233">DNA recombination</keyword>
<keyword id="KW-0234">DNA repair</keyword>
<reference key="1">
    <citation type="submission" date="2006-12" db="EMBL/GenBank/DDBJ databases">
        <title>Complete sequence of Acidovorax avenae subsp. citrulli AAC00-1.</title>
        <authorList>
            <person name="Copeland A."/>
            <person name="Lucas S."/>
            <person name="Lapidus A."/>
            <person name="Barry K."/>
            <person name="Detter J.C."/>
            <person name="Glavina del Rio T."/>
            <person name="Dalin E."/>
            <person name="Tice H."/>
            <person name="Pitluck S."/>
            <person name="Kiss H."/>
            <person name="Brettin T."/>
            <person name="Bruce D."/>
            <person name="Han C."/>
            <person name="Tapia R."/>
            <person name="Gilna P."/>
            <person name="Schmutz J."/>
            <person name="Larimer F."/>
            <person name="Land M."/>
            <person name="Hauser L."/>
            <person name="Kyrpides N."/>
            <person name="Kim E."/>
            <person name="Stahl D."/>
            <person name="Richardson P."/>
        </authorList>
    </citation>
    <scope>NUCLEOTIDE SEQUENCE [LARGE SCALE GENOMIC DNA]</scope>
    <source>
        <strain>AAC00-1</strain>
    </source>
</reference>
<accession>A1TLF2</accession>